<keyword id="KW-0256">Endoplasmic reticulum</keyword>
<keyword id="KW-0275">Fatty acid biosynthesis</keyword>
<keyword id="KW-0276">Fatty acid metabolism</keyword>
<keyword id="KW-0325">Glycoprotein</keyword>
<keyword id="KW-0444">Lipid biosynthesis</keyword>
<keyword id="KW-0443">Lipid metabolism</keyword>
<keyword id="KW-0472">Membrane</keyword>
<keyword id="KW-1185">Reference proteome</keyword>
<keyword id="KW-0808">Transferase</keyword>
<keyword id="KW-0812">Transmembrane</keyword>
<keyword id="KW-1133">Transmembrane helix</keyword>
<proteinExistence type="evidence at protein level"/>
<feature type="chain" id="PRO_0000207540" description="Very long chain fatty acid elongase 3">
    <location>
        <begin position="1"/>
        <end position="270"/>
    </location>
</feature>
<feature type="transmembrane region" description="Helical" evidence="1">
    <location>
        <begin position="29"/>
        <end position="49"/>
    </location>
</feature>
<feature type="transmembrane region" description="Helical" evidence="1">
    <location>
        <begin position="63"/>
        <end position="83"/>
    </location>
</feature>
<feature type="transmembrane region" description="Helical" evidence="1">
    <location>
        <begin position="115"/>
        <end position="135"/>
    </location>
</feature>
<feature type="transmembrane region" description="Helical" evidence="1">
    <location>
        <begin position="140"/>
        <end position="160"/>
    </location>
</feature>
<feature type="transmembrane region" description="Helical" evidence="1">
    <location>
        <begin position="164"/>
        <end position="184"/>
    </location>
</feature>
<feature type="transmembrane region" description="Helical" evidence="1">
    <location>
        <begin position="198"/>
        <end position="218"/>
    </location>
</feature>
<feature type="transmembrane region" description="Helical" evidence="1">
    <location>
        <begin position="235"/>
        <end position="255"/>
    </location>
</feature>
<feature type="short sequence motif" description="Di-lysine motif" evidence="1">
    <location>
        <begin position="266"/>
        <end position="270"/>
    </location>
</feature>
<feature type="glycosylation site" description="N-linked (GlcNAc...) asparagine" evidence="1">
    <location>
        <position position="6"/>
    </location>
</feature>
<feature type="glycosylation site" description="N-linked (GlcNAc...) asparagine" evidence="1">
    <location>
        <position position="110"/>
    </location>
</feature>
<dbReference type="EC" id="2.3.1.199" evidence="1 2 3"/>
<dbReference type="EMBL" id="AL160011">
    <property type="status" value="NOT_ANNOTATED_CDS"/>
    <property type="molecule type" value="Genomic_DNA"/>
</dbReference>
<dbReference type="EMBL" id="CH471066">
    <property type="protein sequence ID" value="EAW49711.1"/>
    <property type="molecule type" value="Genomic_DNA"/>
</dbReference>
<dbReference type="EMBL" id="BC034344">
    <property type="protein sequence ID" value="AAH34344.1"/>
    <property type="molecule type" value="mRNA"/>
</dbReference>
<dbReference type="EMBL" id="AF292387">
    <property type="protein sequence ID" value="AAG17875.1"/>
    <property type="molecule type" value="Genomic_DNA"/>
</dbReference>
<dbReference type="CCDS" id="CCDS7531.1"/>
<dbReference type="RefSeq" id="NP_689523.1">
    <property type="nucleotide sequence ID" value="NM_152310.3"/>
</dbReference>
<dbReference type="RefSeq" id="XP_011538547.1">
    <property type="nucleotide sequence ID" value="XM_011540245.2"/>
</dbReference>
<dbReference type="RefSeq" id="XP_054222851.1">
    <property type="nucleotide sequence ID" value="XM_054366876.1"/>
</dbReference>
<dbReference type="SMR" id="Q9HB03"/>
<dbReference type="BioGRID" id="123637">
    <property type="interactions" value="10"/>
</dbReference>
<dbReference type="FunCoup" id="Q9HB03">
    <property type="interactions" value="359"/>
</dbReference>
<dbReference type="IntAct" id="Q9HB03">
    <property type="interactions" value="5"/>
</dbReference>
<dbReference type="STRING" id="9606.ENSP00000359022"/>
<dbReference type="BindingDB" id="Q9HB03"/>
<dbReference type="ChEMBL" id="CHEMBL5791"/>
<dbReference type="SwissLipids" id="SLP:000000248"/>
<dbReference type="GlyCosmos" id="Q9HB03">
    <property type="glycosylation" value="2 sites, No reported glycans"/>
</dbReference>
<dbReference type="GlyGen" id="Q9HB03">
    <property type="glycosylation" value="2 sites, 1 N-linked glycan (1 site)"/>
</dbReference>
<dbReference type="iPTMnet" id="Q9HB03"/>
<dbReference type="PhosphoSitePlus" id="Q9HB03"/>
<dbReference type="BioMuta" id="ELOVL3"/>
<dbReference type="DMDM" id="26006738"/>
<dbReference type="MassIVE" id="Q9HB03"/>
<dbReference type="PaxDb" id="9606-ENSP00000359022"/>
<dbReference type="Antibodypedia" id="31401">
    <property type="antibodies" value="174 antibodies from 24 providers"/>
</dbReference>
<dbReference type="DNASU" id="83401"/>
<dbReference type="Ensembl" id="ENST00000370005.4">
    <property type="protein sequence ID" value="ENSP00000359022.3"/>
    <property type="gene ID" value="ENSG00000119915.5"/>
</dbReference>
<dbReference type="GeneID" id="83401"/>
<dbReference type="KEGG" id="hsa:83401"/>
<dbReference type="MANE-Select" id="ENST00000370005.4">
    <property type="protein sequence ID" value="ENSP00000359022.3"/>
    <property type="RefSeq nucleotide sequence ID" value="NM_152310.3"/>
    <property type="RefSeq protein sequence ID" value="NP_689523.1"/>
</dbReference>
<dbReference type="UCSC" id="uc001kut.5">
    <property type="organism name" value="human"/>
</dbReference>
<dbReference type="AGR" id="HGNC:18047"/>
<dbReference type="CTD" id="83401"/>
<dbReference type="DisGeNET" id="83401"/>
<dbReference type="GeneCards" id="ELOVL3"/>
<dbReference type="HGNC" id="HGNC:18047">
    <property type="gene designation" value="ELOVL3"/>
</dbReference>
<dbReference type="HPA" id="ENSG00000119915">
    <property type="expression patterns" value="Tissue enriched (skin)"/>
</dbReference>
<dbReference type="MIM" id="611815">
    <property type="type" value="gene"/>
</dbReference>
<dbReference type="neXtProt" id="NX_Q9HB03"/>
<dbReference type="OpenTargets" id="ENSG00000119915"/>
<dbReference type="PharmGKB" id="PA27762"/>
<dbReference type="VEuPathDB" id="HostDB:ENSG00000119915"/>
<dbReference type="eggNOG" id="KOG3072">
    <property type="taxonomic scope" value="Eukaryota"/>
</dbReference>
<dbReference type="GeneTree" id="ENSGT01050000244965"/>
<dbReference type="HOGENOM" id="CLU_048483_1_1_1"/>
<dbReference type="InParanoid" id="Q9HB03"/>
<dbReference type="OMA" id="FGVHAIM"/>
<dbReference type="OrthoDB" id="10259681at2759"/>
<dbReference type="PAN-GO" id="Q9HB03">
    <property type="GO annotations" value="7 GO annotations based on evolutionary models"/>
</dbReference>
<dbReference type="PhylomeDB" id="Q9HB03"/>
<dbReference type="TreeFam" id="TF106467"/>
<dbReference type="BioCyc" id="MetaCyc:ENSG00000119915-MONOMER"/>
<dbReference type="PathwayCommons" id="Q9HB03"/>
<dbReference type="Reactome" id="R-HSA-2046105">
    <property type="pathway name" value="Linoleic acid (LA) metabolism"/>
</dbReference>
<dbReference type="Reactome" id="R-HSA-2046106">
    <property type="pathway name" value="alpha-linolenic acid (ALA) metabolism"/>
</dbReference>
<dbReference type="Reactome" id="R-HSA-75876">
    <property type="pathway name" value="Synthesis of very long-chain fatty acyl-CoAs"/>
</dbReference>
<dbReference type="Reactome" id="R-HSA-9844594">
    <property type="pathway name" value="Transcriptional regulation of brown and beige adipocyte differentiation by EBF2"/>
</dbReference>
<dbReference type="SignaLink" id="Q9HB03"/>
<dbReference type="SIGNOR" id="Q9HB03"/>
<dbReference type="UniPathway" id="UPA00658"/>
<dbReference type="BioGRID-ORCS" id="83401">
    <property type="hits" value="11 hits in 1151 CRISPR screens"/>
</dbReference>
<dbReference type="GenomeRNAi" id="83401"/>
<dbReference type="Pharos" id="Q9HB03">
    <property type="development level" value="Tchem"/>
</dbReference>
<dbReference type="PRO" id="PR:Q9HB03"/>
<dbReference type="Proteomes" id="UP000005640">
    <property type="component" value="Chromosome 10"/>
</dbReference>
<dbReference type="RNAct" id="Q9HB03">
    <property type="molecule type" value="protein"/>
</dbReference>
<dbReference type="Bgee" id="ENSG00000119915">
    <property type="expression patterns" value="Expressed in upper leg skin and 97 other cell types or tissues"/>
</dbReference>
<dbReference type="GO" id="GO:0005783">
    <property type="term" value="C:endoplasmic reticulum"/>
    <property type="evidence" value="ECO:0000314"/>
    <property type="project" value="UniProtKB"/>
</dbReference>
<dbReference type="GO" id="GO:0005789">
    <property type="term" value="C:endoplasmic reticulum membrane"/>
    <property type="evidence" value="ECO:0000318"/>
    <property type="project" value="GO_Central"/>
</dbReference>
<dbReference type="GO" id="GO:0009922">
    <property type="term" value="F:fatty acid elongase activity"/>
    <property type="evidence" value="ECO:0000269"/>
    <property type="project" value="Reactome"/>
</dbReference>
<dbReference type="GO" id="GO:0036109">
    <property type="term" value="P:alpha-linolenic acid metabolic process"/>
    <property type="evidence" value="ECO:0000304"/>
    <property type="project" value="Reactome"/>
</dbReference>
<dbReference type="GO" id="GO:0034625">
    <property type="term" value="P:fatty acid elongation, monounsaturated fatty acid"/>
    <property type="evidence" value="ECO:0000314"/>
    <property type="project" value="UniProtKB"/>
</dbReference>
<dbReference type="GO" id="GO:0034626">
    <property type="term" value="P:fatty acid elongation, polyunsaturated fatty acid"/>
    <property type="evidence" value="ECO:0000314"/>
    <property type="project" value="UniProtKB"/>
</dbReference>
<dbReference type="GO" id="GO:0019367">
    <property type="term" value="P:fatty acid elongation, saturated fatty acid"/>
    <property type="evidence" value="ECO:0000314"/>
    <property type="project" value="UniProtKB"/>
</dbReference>
<dbReference type="GO" id="GO:0043651">
    <property type="term" value="P:linoleic acid metabolic process"/>
    <property type="evidence" value="ECO:0000304"/>
    <property type="project" value="Reactome"/>
</dbReference>
<dbReference type="GO" id="GO:0035338">
    <property type="term" value="P:long-chain fatty-acyl-CoA biosynthetic process"/>
    <property type="evidence" value="ECO:0000304"/>
    <property type="project" value="Reactome"/>
</dbReference>
<dbReference type="GO" id="GO:0120162">
    <property type="term" value="P:positive regulation of cold-induced thermogenesis"/>
    <property type="evidence" value="ECO:0000250"/>
    <property type="project" value="YuBioLab"/>
</dbReference>
<dbReference type="GO" id="GO:0030148">
    <property type="term" value="P:sphingolipid biosynthetic process"/>
    <property type="evidence" value="ECO:0000318"/>
    <property type="project" value="GO_Central"/>
</dbReference>
<dbReference type="GO" id="GO:0006636">
    <property type="term" value="P:unsaturated fatty acid biosynthetic process"/>
    <property type="evidence" value="ECO:0007669"/>
    <property type="project" value="UniProtKB-UniRule"/>
</dbReference>
<dbReference type="GO" id="GO:0042761">
    <property type="term" value="P:very long-chain fatty acid biosynthetic process"/>
    <property type="evidence" value="ECO:0000314"/>
    <property type="project" value="UniProtKB"/>
</dbReference>
<dbReference type="HAMAP" id="MF_03203">
    <property type="entry name" value="VLCF_elongase_3"/>
    <property type="match status" value="1"/>
</dbReference>
<dbReference type="InterPro" id="IPR030457">
    <property type="entry name" value="ELO_CS"/>
</dbReference>
<dbReference type="InterPro" id="IPR002076">
    <property type="entry name" value="ELO_fam"/>
</dbReference>
<dbReference type="InterPro" id="IPR033679">
    <property type="entry name" value="ELOVL3"/>
</dbReference>
<dbReference type="PANTHER" id="PTHR11157:SF68">
    <property type="entry name" value="ELONGATION OF VERY LONG CHAIN FATTY ACIDS PROTEIN 3"/>
    <property type="match status" value="1"/>
</dbReference>
<dbReference type="PANTHER" id="PTHR11157">
    <property type="entry name" value="FATTY ACID ACYL TRANSFERASE-RELATED"/>
    <property type="match status" value="1"/>
</dbReference>
<dbReference type="Pfam" id="PF01151">
    <property type="entry name" value="ELO"/>
    <property type="match status" value="1"/>
</dbReference>
<dbReference type="PROSITE" id="PS01188">
    <property type="entry name" value="ELO"/>
    <property type="match status" value="1"/>
</dbReference>
<evidence type="ECO:0000255" key="1">
    <source>
        <dbReference type="HAMAP-Rule" id="MF_03203"/>
    </source>
</evidence>
<evidence type="ECO:0000269" key="2">
    <source>
    </source>
</evidence>
<evidence type="ECO:0000269" key="3">
    <source>
    </source>
</evidence>
<evidence type="ECO:0000269" key="4">
    <source>
    </source>
</evidence>
<evidence type="ECO:0000305" key="5">
    <source>
    </source>
</evidence>
<evidence type="ECO:0000305" key="6">
    <source>
    </source>
</evidence>
<accession>Q9HB03</accession>
<accession>Q5VZL3</accession>
<accession>Q8N180</accession>
<protein>
    <recommendedName>
        <fullName evidence="1">Very long chain fatty acid elongase 3</fullName>
        <ecNumber evidence="1 2 3">2.3.1.199</ecNumber>
    </recommendedName>
    <alternativeName>
        <fullName evidence="1">3-keto acyl-CoA synthase ELOVL3</fullName>
    </alternativeName>
    <alternativeName>
        <fullName>Cold-inducible glycoprotein of 30 kDa</fullName>
    </alternativeName>
    <alternativeName>
        <fullName evidence="1">ELOVL fatty acid elongase 3</fullName>
        <shortName evidence="1">ELOVL FA elongase 3</shortName>
    </alternativeName>
    <alternativeName>
        <fullName evidence="1">Elongation of very long chain fatty acids protein 3</fullName>
    </alternativeName>
    <alternativeName>
        <fullName evidence="1">Very long chain 3-ketoacyl-CoA synthase 3</fullName>
    </alternativeName>
    <alternativeName>
        <fullName evidence="1">Very long chain 3-oxoacyl-CoA synthase 3</fullName>
    </alternativeName>
</protein>
<name>ELOV3_HUMAN</name>
<organism>
    <name type="scientific">Homo sapiens</name>
    <name type="common">Human</name>
    <dbReference type="NCBI Taxonomy" id="9606"/>
    <lineage>
        <taxon>Eukaryota</taxon>
        <taxon>Metazoa</taxon>
        <taxon>Chordata</taxon>
        <taxon>Craniata</taxon>
        <taxon>Vertebrata</taxon>
        <taxon>Euteleostomi</taxon>
        <taxon>Mammalia</taxon>
        <taxon>Eutheria</taxon>
        <taxon>Euarchontoglires</taxon>
        <taxon>Primates</taxon>
        <taxon>Haplorrhini</taxon>
        <taxon>Catarrhini</taxon>
        <taxon>Hominidae</taxon>
        <taxon>Homo</taxon>
    </lineage>
</organism>
<gene>
    <name evidence="1" type="primary">ELOVL3</name>
    <name type="synonym">CIG30</name>
</gene>
<sequence>MVTAMNVSHEVNQLFQPYNFELSKDMRPFFEEYWATSFPIALIYLVLIAVGQNYMKERKGFNLQGPLILWSFCLAIFSILGAVRMWGIMGTVLLTGGLKQTVCFINFIDNSTVKFWSWVFLLSKVIELGDTAFIILRKRPLIFIHWYHHSTVLVYTSFGYKNKVPAGGWFVTMNFGVHAIMYTYYTLKAANVKPPKMLPMLITSLQILQMFVGAIVSILTYIWRQDQGCHTTMEHLFWSFILYMTYFILFAHFFCQTYIRPKVKAKTKSQ</sequence>
<comment type="function">
    <text evidence="1 3">Catalyzes the first and rate-limiting reaction of the four reactions that constitute the long-chain fatty acids elongation cycle. This endoplasmic reticulum-bound enzymatic process allows the addition of 2 carbons to the chain of long- and very long-chain fatty acids (VLCFAs) per cycle. Condensing enzyme that exhibits activity toward saturated and unsaturated acyl-CoA substrates with higher activity toward C18 acyl-CoAs, especially C18:0 acyl-CoAs. May participate in the production of saturated and monounsaturated VLCFAs of different chain lengths that are involved in multiple biological processes as precursors of membrane lipids and lipid mediators.</text>
</comment>
<comment type="catalytic activity">
    <reaction evidence="1 2 3">
        <text>a very-long-chain acyl-CoA + malonyl-CoA + H(+) = a very-long-chain 3-oxoacyl-CoA + CO2 + CoA</text>
        <dbReference type="Rhea" id="RHEA:32727"/>
        <dbReference type="ChEBI" id="CHEBI:15378"/>
        <dbReference type="ChEBI" id="CHEBI:16526"/>
        <dbReference type="ChEBI" id="CHEBI:57287"/>
        <dbReference type="ChEBI" id="CHEBI:57384"/>
        <dbReference type="ChEBI" id="CHEBI:90725"/>
        <dbReference type="ChEBI" id="CHEBI:90736"/>
        <dbReference type="EC" id="2.3.1.199"/>
    </reaction>
    <physiologicalReaction direction="left-to-right" evidence="6">
        <dbReference type="Rhea" id="RHEA:32728"/>
    </physiologicalReaction>
</comment>
<comment type="catalytic activity">
    <reaction evidence="2 3">
        <text>eicosanoyl-CoA + malonyl-CoA + H(+) = 3-oxodocosanoyl-CoA + CO2 + CoA</text>
        <dbReference type="Rhea" id="RHEA:35327"/>
        <dbReference type="ChEBI" id="CHEBI:15378"/>
        <dbReference type="ChEBI" id="CHEBI:16526"/>
        <dbReference type="ChEBI" id="CHEBI:57287"/>
        <dbReference type="ChEBI" id="CHEBI:57380"/>
        <dbReference type="ChEBI" id="CHEBI:57384"/>
        <dbReference type="ChEBI" id="CHEBI:71451"/>
    </reaction>
    <physiologicalReaction direction="left-to-right" evidence="6">
        <dbReference type="Rhea" id="RHEA:35328"/>
    </physiologicalReaction>
</comment>
<comment type="catalytic activity">
    <reaction evidence="2 3">
        <text>hexadecanoyl-CoA + malonyl-CoA + H(+) = 3-oxooctadecanoyl-CoA + CO2 + CoA</text>
        <dbReference type="Rhea" id="RHEA:35315"/>
        <dbReference type="ChEBI" id="CHEBI:15378"/>
        <dbReference type="ChEBI" id="CHEBI:16526"/>
        <dbReference type="ChEBI" id="CHEBI:57287"/>
        <dbReference type="ChEBI" id="CHEBI:57379"/>
        <dbReference type="ChEBI" id="CHEBI:57384"/>
        <dbReference type="ChEBI" id="CHEBI:71407"/>
    </reaction>
    <physiologicalReaction direction="left-to-right" evidence="6">
        <dbReference type="Rhea" id="RHEA:35316"/>
    </physiologicalReaction>
</comment>
<comment type="catalytic activity">
    <reaction evidence="2 3">
        <text>octadecanoyl-CoA + malonyl-CoA + H(+) = 3-oxoeicosanoyl-CoA + CO2 + CoA</text>
        <dbReference type="Rhea" id="RHEA:35319"/>
        <dbReference type="ChEBI" id="CHEBI:15378"/>
        <dbReference type="ChEBI" id="CHEBI:16526"/>
        <dbReference type="ChEBI" id="CHEBI:57287"/>
        <dbReference type="ChEBI" id="CHEBI:57384"/>
        <dbReference type="ChEBI" id="CHEBI:57394"/>
        <dbReference type="ChEBI" id="CHEBI:65115"/>
    </reaction>
    <physiologicalReaction direction="left-to-right" evidence="6">
        <dbReference type="Rhea" id="RHEA:35320"/>
    </physiologicalReaction>
</comment>
<comment type="catalytic activity">
    <reaction evidence="3">
        <text>(9Z)-octadecenoyl-CoA + malonyl-CoA + H(+) = 3-oxo-(11Z)-eicosenoyl-CoA + CO2 + CoA</text>
        <dbReference type="Rhea" id="RHEA:36511"/>
        <dbReference type="ChEBI" id="CHEBI:15378"/>
        <dbReference type="ChEBI" id="CHEBI:16526"/>
        <dbReference type="ChEBI" id="CHEBI:57287"/>
        <dbReference type="ChEBI" id="CHEBI:57384"/>
        <dbReference type="ChEBI" id="CHEBI:57387"/>
        <dbReference type="ChEBI" id="CHEBI:74011"/>
    </reaction>
    <physiologicalReaction direction="left-to-right" evidence="6">
        <dbReference type="Rhea" id="RHEA:36512"/>
    </physiologicalReaction>
</comment>
<comment type="catalytic activity">
    <reaction evidence="3">
        <text>(9Z,12Z)-octadecadienoyl-CoA + malonyl-CoA + H(+) = (11Z,14Z)-3-oxoicosa-11,14-dienoyl-CoA + CO2 + CoA</text>
        <dbReference type="Rhea" id="RHEA:36503"/>
        <dbReference type="ChEBI" id="CHEBI:15378"/>
        <dbReference type="ChEBI" id="CHEBI:16526"/>
        <dbReference type="ChEBI" id="CHEBI:57287"/>
        <dbReference type="ChEBI" id="CHEBI:57383"/>
        <dbReference type="ChEBI" id="CHEBI:57384"/>
        <dbReference type="ChEBI" id="CHEBI:74012"/>
    </reaction>
    <physiologicalReaction direction="left-to-right" evidence="6">
        <dbReference type="Rhea" id="RHEA:36504"/>
    </physiologicalReaction>
</comment>
<comment type="catalytic activity">
    <reaction evidence="3">
        <text>(9Z,12Z,15Z)-octadecatrienoyl-CoA + malonyl-CoA + H(+) = (11Z,14Z,17Z)-3-oxoeicosatrienoyl-CoA + CO2 + CoA</text>
        <dbReference type="Rhea" id="RHEA:36523"/>
        <dbReference type="ChEBI" id="CHEBI:15378"/>
        <dbReference type="ChEBI" id="CHEBI:16526"/>
        <dbReference type="ChEBI" id="CHEBI:57287"/>
        <dbReference type="ChEBI" id="CHEBI:57384"/>
        <dbReference type="ChEBI" id="CHEBI:74034"/>
        <dbReference type="ChEBI" id="CHEBI:74054"/>
    </reaction>
    <physiologicalReaction direction="left-to-right" evidence="6">
        <dbReference type="Rhea" id="RHEA:36524"/>
    </physiologicalReaction>
</comment>
<comment type="catalytic activity">
    <reaction evidence="3">
        <text>docosanoyl-CoA + malonyl-CoA + H(+) = 3-oxotetracosanoyl-CoA + CO2 + CoA</text>
        <dbReference type="Rhea" id="RHEA:36507"/>
        <dbReference type="ChEBI" id="CHEBI:15378"/>
        <dbReference type="ChEBI" id="CHEBI:16526"/>
        <dbReference type="ChEBI" id="CHEBI:57287"/>
        <dbReference type="ChEBI" id="CHEBI:57384"/>
        <dbReference type="ChEBI" id="CHEBI:65059"/>
        <dbReference type="ChEBI" id="CHEBI:73977"/>
    </reaction>
    <physiologicalReaction direction="left-to-right" evidence="6">
        <dbReference type="Rhea" id="RHEA:36508"/>
    </physiologicalReaction>
</comment>
<comment type="catalytic activity">
    <reaction evidence="2">
        <text>tetradecanoyl-CoA + malonyl-CoA + H(+) = 3-oxohexadecanoyl-CoA + CO2 + CoA</text>
        <dbReference type="Rhea" id="RHEA:39167"/>
        <dbReference type="ChEBI" id="CHEBI:15378"/>
        <dbReference type="ChEBI" id="CHEBI:16526"/>
        <dbReference type="ChEBI" id="CHEBI:57287"/>
        <dbReference type="ChEBI" id="CHEBI:57349"/>
        <dbReference type="ChEBI" id="CHEBI:57384"/>
        <dbReference type="ChEBI" id="CHEBI:57385"/>
    </reaction>
    <physiologicalReaction direction="left-to-right" evidence="5">
        <dbReference type="Rhea" id="RHEA:39168"/>
    </physiologicalReaction>
</comment>
<comment type="pathway">
    <text evidence="1 3">Lipid metabolism; polyunsaturated fatty acid biosynthesis.</text>
</comment>
<comment type="subunit">
    <text evidence="4">Interacts with TECR.</text>
</comment>
<comment type="subcellular location">
    <subcellularLocation>
        <location evidence="1 3">Endoplasmic reticulum membrane</location>
        <topology evidence="1">Multi-pass membrane protein</topology>
    </subcellularLocation>
</comment>
<comment type="tissue specificity">
    <text evidence="3">Testis.</text>
</comment>
<comment type="domain">
    <text evidence="1">The C-terminal di-lysine motif may confer endoplasmic reticulum localization.</text>
</comment>
<comment type="PTM">
    <text evidence="1 3">N-Glycosylated.</text>
</comment>
<comment type="similarity">
    <text evidence="1">Belongs to the ELO family. ELOVL3 subfamily.</text>
</comment>
<reference key="1">
    <citation type="journal article" date="2004" name="Nature">
        <title>The DNA sequence and comparative analysis of human chromosome 10.</title>
        <authorList>
            <person name="Deloukas P."/>
            <person name="Earthrowl M.E."/>
            <person name="Grafham D.V."/>
            <person name="Rubenfield M."/>
            <person name="French L."/>
            <person name="Steward C.A."/>
            <person name="Sims S.K."/>
            <person name="Jones M.C."/>
            <person name="Searle S."/>
            <person name="Scott C."/>
            <person name="Howe K."/>
            <person name="Hunt S.E."/>
            <person name="Andrews T.D."/>
            <person name="Gilbert J.G.R."/>
            <person name="Swarbreck D."/>
            <person name="Ashurst J.L."/>
            <person name="Taylor A."/>
            <person name="Battles J."/>
            <person name="Bird C.P."/>
            <person name="Ainscough R."/>
            <person name="Almeida J.P."/>
            <person name="Ashwell R.I.S."/>
            <person name="Ambrose K.D."/>
            <person name="Babbage A.K."/>
            <person name="Bagguley C.L."/>
            <person name="Bailey J."/>
            <person name="Banerjee R."/>
            <person name="Bates K."/>
            <person name="Beasley H."/>
            <person name="Bray-Allen S."/>
            <person name="Brown A.J."/>
            <person name="Brown J.Y."/>
            <person name="Burford D.C."/>
            <person name="Burrill W."/>
            <person name="Burton J."/>
            <person name="Cahill P."/>
            <person name="Camire D."/>
            <person name="Carter N.P."/>
            <person name="Chapman J.C."/>
            <person name="Clark S.Y."/>
            <person name="Clarke G."/>
            <person name="Clee C.M."/>
            <person name="Clegg S."/>
            <person name="Corby N."/>
            <person name="Coulson A."/>
            <person name="Dhami P."/>
            <person name="Dutta I."/>
            <person name="Dunn M."/>
            <person name="Faulkner L."/>
            <person name="Frankish A."/>
            <person name="Frankland J.A."/>
            <person name="Garner P."/>
            <person name="Garnett J."/>
            <person name="Gribble S."/>
            <person name="Griffiths C."/>
            <person name="Grocock R."/>
            <person name="Gustafson E."/>
            <person name="Hammond S."/>
            <person name="Harley J.L."/>
            <person name="Hart E."/>
            <person name="Heath P.D."/>
            <person name="Ho T.P."/>
            <person name="Hopkins B."/>
            <person name="Horne J."/>
            <person name="Howden P.J."/>
            <person name="Huckle E."/>
            <person name="Hynds C."/>
            <person name="Johnson C."/>
            <person name="Johnson D."/>
            <person name="Kana A."/>
            <person name="Kay M."/>
            <person name="Kimberley A.M."/>
            <person name="Kershaw J.K."/>
            <person name="Kokkinaki M."/>
            <person name="Laird G.K."/>
            <person name="Lawlor S."/>
            <person name="Lee H.M."/>
            <person name="Leongamornlert D.A."/>
            <person name="Laird G."/>
            <person name="Lloyd C."/>
            <person name="Lloyd D.M."/>
            <person name="Loveland J."/>
            <person name="Lovell J."/>
            <person name="McLaren S."/>
            <person name="McLay K.E."/>
            <person name="McMurray A."/>
            <person name="Mashreghi-Mohammadi M."/>
            <person name="Matthews L."/>
            <person name="Milne S."/>
            <person name="Nickerson T."/>
            <person name="Nguyen M."/>
            <person name="Overton-Larty E."/>
            <person name="Palmer S.A."/>
            <person name="Pearce A.V."/>
            <person name="Peck A.I."/>
            <person name="Pelan S."/>
            <person name="Phillimore B."/>
            <person name="Porter K."/>
            <person name="Rice C.M."/>
            <person name="Rogosin A."/>
            <person name="Ross M.T."/>
            <person name="Sarafidou T."/>
            <person name="Sehra H.K."/>
            <person name="Shownkeen R."/>
            <person name="Skuce C.D."/>
            <person name="Smith M."/>
            <person name="Standring L."/>
            <person name="Sycamore N."/>
            <person name="Tester J."/>
            <person name="Thorpe A."/>
            <person name="Torcasso W."/>
            <person name="Tracey A."/>
            <person name="Tromans A."/>
            <person name="Tsolas J."/>
            <person name="Wall M."/>
            <person name="Walsh J."/>
            <person name="Wang H."/>
            <person name="Weinstock K."/>
            <person name="West A.P."/>
            <person name="Willey D.L."/>
            <person name="Whitehead S.L."/>
            <person name="Wilming L."/>
            <person name="Wray P.W."/>
            <person name="Young L."/>
            <person name="Chen Y."/>
            <person name="Lovering R.C."/>
            <person name="Moschonas N.K."/>
            <person name="Siebert R."/>
            <person name="Fechtel K."/>
            <person name="Bentley D."/>
            <person name="Durbin R.M."/>
            <person name="Hubbard T."/>
            <person name="Doucette-Stamm L."/>
            <person name="Beck S."/>
            <person name="Smith D.R."/>
            <person name="Rogers J."/>
        </authorList>
    </citation>
    <scope>NUCLEOTIDE SEQUENCE [LARGE SCALE GENOMIC DNA]</scope>
</reference>
<reference key="2">
    <citation type="submission" date="2005-09" db="EMBL/GenBank/DDBJ databases">
        <authorList>
            <person name="Mural R.J."/>
            <person name="Istrail S."/>
            <person name="Sutton G.G."/>
            <person name="Florea L."/>
            <person name="Halpern A.L."/>
            <person name="Mobarry C.M."/>
            <person name="Lippert R."/>
            <person name="Walenz B."/>
            <person name="Shatkay H."/>
            <person name="Dew I."/>
            <person name="Miller J.R."/>
            <person name="Flanigan M.J."/>
            <person name="Edwards N.J."/>
            <person name="Bolanos R."/>
            <person name="Fasulo D."/>
            <person name="Halldorsson B.V."/>
            <person name="Hannenhalli S."/>
            <person name="Turner R."/>
            <person name="Yooseph S."/>
            <person name="Lu F."/>
            <person name="Nusskern D.R."/>
            <person name="Shue B.C."/>
            <person name="Zheng X.H."/>
            <person name="Zhong F."/>
            <person name="Delcher A.L."/>
            <person name="Huson D.H."/>
            <person name="Kravitz S.A."/>
            <person name="Mouchard L."/>
            <person name="Reinert K."/>
            <person name="Remington K.A."/>
            <person name="Clark A.G."/>
            <person name="Waterman M.S."/>
            <person name="Eichler E.E."/>
            <person name="Adams M.D."/>
            <person name="Hunkapiller M.W."/>
            <person name="Myers E.W."/>
            <person name="Venter J.C."/>
        </authorList>
    </citation>
    <scope>NUCLEOTIDE SEQUENCE [LARGE SCALE GENOMIC DNA]</scope>
</reference>
<reference key="3">
    <citation type="journal article" date="2004" name="Genome Res.">
        <title>The status, quality, and expansion of the NIH full-length cDNA project: the Mammalian Gene Collection (MGC).</title>
        <authorList>
            <consortium name="The MGC Project Team"/>
        </authorList>
    </citation>
    <scope>NUCLEOTIDE SEQUENCE [LARGE SCALE MRNA]</scope>
    <source>
        <tissue>Skin</tissue>
    </source>
</reference>
<reference key="4">
    <citation type="submission" date="2000-08" db="EMBL/GenBank/DDBJ databases">
        <title>The CIG30/PITX3/GBF1 gene configuration is conserved between human and mouse genomes.</title>
        <authorList>
            <person name="Semina E.V."/>
            <person name="Murray J.C."/>
        </authorList>
    </citation>
    <scope>NUCLEOTIDE SEQUENCE [GENOMIC DNA] OF 35-270</scope>
</reference>
<reference key="5">
    <citation type="journal article" date="2009" name="Lipids">
        <title>Development of a high-density assay for long-chain fatty acyl-CoA elongases.</title>
        <authorList>
            <person name="Kitazawa H."/>
            <person name="Miyamoto Y."/>
            <person name="Shimamura K."/>
            <person name="Nagumo A."/>
            <person name="Tokita S."/>
        </authorList>
    </citation>
    <scope>CATALYTIC ACTIVITY</scope>
</reference>
<reference key="6">
    <citation type="journal article" date="2010" name="Proc. Natl. Acad. Sci. U.S.A.">
        <title>ELOVL1 production of C24 acyl-CoAs is linked to C24 sphingolipid synthesis.</title>
        <authorList>
            <person name="Ohno Y."/>
            <person name="Suto S."/>
            <person name="Yamanaka M."/>
            <person name="Mizutani Y."/>
            <person name="Mitsutake S."/>
            <person name="Igarashi Y."/>
            <person name="Sassa T."/>
            <person name="Kihara A."/>
        </authorList>
    </citation>
    <scope>FUNCTION</scope>
    <scope>CATALYTIC ACTIVITY</scope>
    <scope>PATHWAY</scope>
    <scope>SUBCELLULAR LOCATION</scope>
    <scope>GLYCOSYLATION</scope>
    <scope>TISSUE SPECIFICITY</scope>
</reference>
<reference key="7">
    <citation type="journal article" date="2024" name="Biochem. Biophys. Res. Commun.">
        <title>The 3-hydroxyacyl-CoA dehydratase 1/2 form complex with trans-2-enoyl-CoA reductase involved in substrates transfer in very long chain fatty acid elongation.</title>
        <authorList>
            <person name="Zhou Y."/>
            <person name="Lv R."/>
            <person name="Ye R.D."/>
            <person name="Ren R."/>
            <person name="Yu L."/>
        </authorList>
    </citation>
    <scope>INTERACTION WITH TECR</scope>
</reference>